<keyword id="KW-0131">Cell cycle</keyword>
<keyword id="KW-0132">Cell division</keyword>
<keyword id="KW-0159">Chromosome partition</keyword>
<keyword id="KW-0963">Cytoplasm</keyword>
<keyword id="KW-0229">DNA integration</keyword>
<keyword id="KW-0233">DNA recombination</keyword>
<keyword id="KW-0238">DNA-binding</keyword>
<feature type="chain" id="PRO_0000095420" description="Tyrosine recombinase XerD">
    <location>
        <begin position="1"/>
        <end position="295"/>
    </location>
</feature>
<feature type="domain" description="Core-binding (CB)" evidence="3">
    <location>
        <begin position="1"/>
        <end position="85"/>
    </location>
</feature>
<feature type="domain" description="Tyr recombinase" evidence="2">
    <location>
        <begin position="106"/>
        <end position="289"/>
    </location>
</feature>
<feature type="active site" evidence="1">
    <location>
        <position position="146"/>
    </location>
</feature>
<feature type="active site" evidence="1">
    <location>
        <position position="170"/>
    </location>
</feature>
<feature type="active site" evidence="1">
    <location>
        <position position="241"/>
    </location>
</feature>
<feature type="active site" evidence="1">
    <location>
        <position position="244"/>
    </location>
</feature>
<feature type="active site" evidence="1">
    <location>
        <position position="267"/>
    </location>
</feature>
<feature type="active site" description="O-(3'-phospho-DNA)-tyrosine intermediate" evidence="1">
    <location>
        <position position="276"/>
    </location>
</feature>
<sequence>METIIEEYLRFIQIEKGLSSNTIGAYRRDLKKYQDYMTEHHISHIDFIDRQLIQECLGHLIDQGQSAKSIARFISTIRSFHQFAIREKYAAKDPTVLLDSPKYDKKLPDVLNVDEVLALLETPDLNKINGYRDRTMLELLYATGMRVSELIHLELENVNLIMGFVRVFGKGDKERIVPLGDAVIEYLTTYIETIRPQLLKKTVTEVLFLNMHGKPLSRQAIWKMIKQNGVKANIKKTLTPHTLRHSFATHLLENGADLRAVQEMLGHSDISTTQLYTHVSKSQIRKMYNQFHPRA</sequence>
<reference key="1">
    <citation type="journal article" date="2004" name="Proc. Natl. Acad. Sci. U.S.A.">
        <title>Complete genomes of two clinical Staphylococcus aureus strains: evidence for the rapid evolution of virulence and drug resistance.</title>
        <authorList>
            <person name="Holden M.T.G."/>
            <person name="Feil E.J."/>
            <person name="Lindsay J.A."/>
            <person name="Peacock S.J."/>
            <person name="Day N.P.J."/>
            <person name="Enright M.C."/>
            <person name="Foster T.J."/>
            <person name="Moore C.E."/>
            <person name="Hurst L."/>
            <person name="Atkin R."/>
            <person name="Barron A."/>
            <person name="Bason N."/>
            <person name="Bentley S.D."/>
            <person name="Chillingworth C."/>
            <person name="Chillingworth T."/>
            <person name="Churcher C."/>
            <person name="Clark L."/>
            <person name="Corton C."/>
            <person name="Cronin A."/>
            <person name="Doggett J."/>
            <person name="Dowd L."/>
            <person name="Feltwell T."/>
            <person name="Hance Z."/>
            <person name="Harris B."/>
            <person name="Hauser H."/>
            <person name="Holroyd S."/>
            <person name="Jagels K."/>
            <person name="James K.D."/>
            <person name="Lennard N."/>
            <person name="Line A."/>
            <person name="Mayes R."/>
            <person name="Moule S."/>
            <person name="Mungall K."/>
            <person name="Ormond D."/>
            <person name="Quail M.A."/>
            <person name="Rabbinowitsch E."/>
            <person name="Rutherford K.M."/>
            <person name="Sanders M."/>
            <person name="Sharp S."/>
            <person name="Simmonds M."/>
            <person name="Stevens K."/>
            <person name="Whitehead S."/>
            <person name="Barrell B.G."/>
            <person name="Spratt B.G."/>
            <person name="Parkhill J."/>
        </authorList>
    </citation>
    <scope>NUCLEOTIDE SEQUENCE [LARGE SCALE GENOMIC DNA]</scope>
    <source>
        <strain>MSSA476</strain>
    </source>
</reference>
<proteinExistence type="inferred from homology"/>
<evidence type="ECO:0000255" key="1">
    <source>
        <dbReference type="HAMAP-Rule" id="MF_01807"/>
    </source>
</evidence>
<evidence type="ECO:0000255" key="2">
    <source>
        <dbReference type="PROSITE-ProRule" id="PRU01246"/>
    </source>
</evidence>
<evidence type="ECO:0000255" key="3">
    <source>
        <dbReference type="PROSITE-ProRule" id="PRU01248"/>
    </source>
</evidence>
<gene>
    <name evidence="1" type="primary">xerD</name>
    <name type="ordered locus">SAS1437</name>
</gene>
<accession>Q6G967</accession>
<name>XERD_STAAS</name>
<dbReference type="EMBL" id="BX571857">
    <property type="protein sequence ID" value="CAG43214.1"/>
    <property type="molecule type" value="Genomic_DNA"/>
</dbReference>
<dbReference type="RefSeq" id="WP_000447733.1">
    <property type="nucleotide sequence ID" value="NC_002953.3"/>
</dbReference>
<dbReference type="SMR" id="Q6G967"/>
<dbReference type="KEGG" id="sas:SAS1437"/>
<dbReference type="HOGENOM" id="CLU_027562_9_6_9"/>
<dbReference type="GO" id="GO:0005737">
    <property type="term" value="C:cytoplasm"/>
    <property type="evidence" value="ECO:0007669"/>
    <property type="project" value="UniProtKB-SubCell"/>
</dbReference>
<dbReference type="GO" id="GO:0003677">
    <property type="term" value="F:DNA binding"/>
    <property type="evidence" value="ECO:0007669"/>
    <property type="project" value="UniProtKB-KW"/>
</dbReference>
<dbReference type="GO" id="GO:0009037">
    <property type="term" value="F:tyrosine-based site-specific recombinase activity"/>
    <property type="evidence" value="ECO:0007669"/>
    <property type="project" value="UniProtKB-UniRule"/>
</dbReference>
<dbReference type="GO" id="GO:0051301">
    <property type="term" value="P:cell division"/>
    <property type="evidence" value="ECO:0007669"/>
    <property type="project" value="UniProtKB-KW"/>
</dbReference>
<dbReference type="GO" id="GO:0007059">
    <property type="term" value="P:chromosome segregation"/>
    <property type="evidence" value="ECO:0007669"/>
    <property type="project" value="UniProtKB-UniRule"/>
</dbReference>
<dbReference type="GO" id="GO:0006313">
    <property type="term" value="P:DNA transposition"/>
    <property type="evidence" value="ECO:0007669"/>
    <property type="project" value="UniProtKB-UniRule"/>
</dbReference>
<dbReference type="CDD" id="cd00798">
    <property type="entry name" value="INT_XerDC_C"/>
    <property type="match status" value="1"/>
</dbReference>
<dbReference type="Gene3D" id="1.10.150.130">
    <property type="match status" value="1"/>
</dbReference>
<dbReference type="Gene3D" id="1.10.443.10">
    <property type="entry name" value="Intergrase catalytic core"/>
    <property type="match status" value="1"/>
</dbReference>
<dbReference type="HAMAP" id="MF_01808">
    <property type="entry name" value="Recomb_XerC_XerD"/>
    <property type="match status" value="1"/>
</dbReference>
<dbReference type="HAMAP" id="MF_01807">
    <property type="entry name" value="Recomb_XerD"/>
    <property type="match status" value="1"/>
</dbReference>
<dbReference type="InterPro" id="IPR044068">
    <property type="entry name" value="CB"/>
</dbReference>
<dbReference type="InterPro" id="IPR011010">
    <property type="entry name" value="DNA_brk_join_enz"/>
</dbReference>
<dbReference type="InterPro" id="IPR013762">
    <property type="entry name" value="Integrase-like_cat_sf"/>
</dbReference>
<dbReference type="InterPro" id="IPR002104">
    <property type="entry name" value="Integrase_catalytic"/>
</dbReference>
<dbReference type="InterPro" id="IPR010998">
    <property type="entry name" value="Integrase_recombinase_N"/>
</dbReference>
<dbReference type="InterPro" id="IPR004107">
    <property type="entry name" value="Integrase_SAM-like_N"/>
</dbReference>
<dbReference type="InterPro" id="IPR011932">
    <property type="entry name" value="Recomb_XerD"/>
</dbReference>
<dbReference type="InterPro" id="IPR023009">
    <property type="entry name" value="Tyrosine_recombinase_XerC/XerD"/>
</dbReference>
<dbReference type="InterPro" id="IPR050090">
    <property type="entry name" value="Tyrosine_recombinase_XerCD"/>
</dbReference>
<dbReference type="NCBIfam" id="NF001399">
    <property type="entry name" value="PRK00283.1"/>
    <property type="match status" value="1"/>
</dbReference>
<dbReference type="NCBIfam" id="NF040815">
    <property type="entry name" value="recomb_XerA_Arch"/>
    <property type="match status" value="1"/>
</dbReference>
<dbReference type="NCBIfam" id="TIGR02225">
    <property type="entry name" value="recomb_XerD"/>
    <property type="match status" value="1"/>
</dbReference>
<dbReference type="PANTHER" id="PTHR30349">
    <property type="entry name" value="PHAGE INTEGRASE-RELATED"/>
    <property type="match status" value="1"/>
</dbReference>
<dbReference type="PANTHER" id="PTHR30349:SF81">
    <property type="entry name" value="TYROSINE RECOMBINASE XERC"/>
    <property type="match status" value="1"/>
</dbReference>
<dbReference type="Pfam" id="PF02899">
    <property type="entry name" value="Phage_int_SAM_1"/>
    <property type="match status" value="1"/>
</dbReference>
<dbReference type="Pfam" id="PF00589">
    <property type="entry name" value="Phage_integrase"/>
    <property type="match status" value="1"/>
</dbReference>
<dbReference type="SUPFAM" id="SSF56349">
    <property type="entry name" value="DNA breaking-rejoining enzymes"/>
    <property type="match status" value="1"/>
</dbReference>
<dbReference type="PROSITE" id="PS51900">
    <property type="entry name" value="CB"/>
    <property type="match status" value="1"/>
</dbReference>
<dbReference type="PROSITE" id="PS51898">
    <property type="entry name" value="TYR_RECOMBINASE"/>
    <property type="match status" value="1"/>
</dbReference>
<comment type="function">
    <text evidence="1">Site-specific tyrosine recombinase, which acts by catalyzing the cutting and rejoining of the recombining DNA molecules. The XerC-XerD complex is essential to convert dimers of the bacterial chromosome into monomers to permit their segregation at cell division. It also contributes to the segregational stability of plasmids.</text>
</comment>
<comment type="subunit">
    <text evidence="1">Forms a cyclic heterotetrameric complex composed of two molecules of XerC and two molecules of XerD.</text>
</comment>
<comment type="subcellular location">
    <subcellularLocation>
        <location evidence="1">Cytoplasm</location>
    </subcellularLocation>
</comment>
<comment type="similarity">
    <text evidence="1">Belongs to the 'phage' integrase family. XerD subfamily.</text>
</comment>
<protein>
    <recommendedName>
        <fullName evidence="1">Tyrosine recombinase XerD</fullName>
    </recommendedName>
</protein>
<organism>
    <name type="scientific">Staphylococcus aureus (strain MSSA476)</name>
    <dbReference type="NCBI Taxonomy" id="282459"/>
    <lineage>
        <taxon>Bacteria</taxon>
        <taxon>Bacillati</taxon>
        <taxon>Bacillota</taxon>
        <taxon>Bacilli</taxon>
        <taxon>Bacillales</taxon>
        <taxon>Staphylococcaceae</taxon>
        <taxon>Staphylococcus</taxon>
    </lineage>
</organism>